<feature type="signal peptide" evidence="1">
    <location>
        <begin position="1"/>
        <end position="31"/>
    </location>
</feature>
<feature type="chain" id="PRO_0000001005" description="Alpha-galactosidase A">
    <location>
        <begin position="32"/>
        <end position="419"/>
    </location>
</feature>
<feature type="active site" description="Nucleophile" evidence="1">
    <location>
        <position position="170"/>
    </location>
</feature>
<feature type="active site" description="Proton donor" evidence="1">
    <location>
        <position position="231"/>
    </location>
</feature>
<feature type="binding site" evidence="1">
    <location>
        <begin position="203"/>
        <end position="207"/>
    </location>
    <ligand>
        <name>substrate</name>
    </ligand>
</feature>
<feature type="modified residue" description="Phosphotyrosine" evidence="5">
    <location>
        <position position="186"/>
    </location>
</feature>
<feature type="glycosylation site" description="N-linked (GlcNAc...) asparagine" evidence="1">
    <location>
        <position position="139"/>
    </location>
</feature>
<feature type="glycosylation site" description="N-linked (GlcNAc...) asparagine" evidence="1">
    <location>
        <position position="192"/>
    </location>
</feature>
<feature type="glycosylation site" description="N-linked (GlcNAc...) asparagine" evidence="1">
    <location>
        <position position="215"/>
    </location>
</feature>
<feature type="disulfide bond" evidence="1">
    <location>
        <begin position="52"/>
        <end position="94"/>
    </location>
</feature>
<feature type="disulfide bond" evidence="1">
    <location>
        <begin position="56"/>
        <end position="63"/>
    </location>
</feature>
<feature type="disulfide bond" evidence="1">
    <location>
        <begin position="142"/>
        <end position="172"/>
    </location>
</feature>
<feature type="disulfide bond" evidence="1">
    <location>
        <begin position="202"/>
        <end position="223"/>
    </location>
</feature>
<feature type="disulfide bond" evidence="1">
    <location>
        <begin position="378"/>
        <end position="382"/>
    </location>
</feature>
<name>AGAL_MOUSE</name>
<organism>
    <name type="scientific">Mus musculus</name>
    <name type="common">Mouse</name>
    <dbReference type="NCBI Taxonomy" id="10090"/>
    <lineage>
        <taxon>Eukaryota</taxon>
        <taxon>Metazoa</taxon>
        <taxon>Chordata</taxon>
        <taxon>Craniata</taxon>
        <taxon>Vertebrata</taxon>
        <taxon>Euteleostomi</taxon>
        <taxon>Mammalia</taxon>
        <taxon>Eutheria</taxon>
        <taxon>Euarchontoglires</taxon>
        <taxon>Glires</taxon>
        <taxon>Rodentia</taxon>
        <taxon>Myomorpha</taxon>
        <taxon>Muroidea</taxon>
        <taxon>Muridae</taxon>
        <taxon>Murinae</taxon>
        <taxon>Mus</taxon>
        <taxon>Mus</taxon>
    </lineage>
</organism>
<comment type="function">
    <text evidence="2">Catalyzes the hydrolysis of glycosphingolipids and participates in their degradation in the lysosome.</text>
</comment>
<comment type="catalytic activity">
    <reaction evidence="2">
        <text>Hydrolysis of terminal, non-reducing alpha-D-galactose residues in alpha-D-galactosides, including galactose oligosaccharides, galactomannans and galactolipids.</text>
        <dbReference type="EC" id="3.2.1.22"/>
    </reaction>
</comment>
<comment type="catalytic activity">
    <reaction evidence="2">
        <text>a globoside Gb3Cer (d18:1(4E)) + H2O = a beta-D-Gal-(1-&gt;4)-beta-D-Glc-(1&lt;-&gt;1)-Cer(d18:1(4E)) + D-galactose</text>
        <dbReference type="Rhea" id="RHEA:21112"/>
        <dbReference type="ChEBI" id="CHEBI:4139"/>
        <dbReference type="ChEBI" id="CHEBI:15377"/>
        <dbReference type="ChEBI" id="CHEBI:17950"/>
        <dbReference type="ChEBI" id="CHEBI:18313"/>
    </reaction>
    <physiologicalReaction direction="left-to-right" evidence="2">
        <dbReference type="Rhea" id="RHEA:21113"/>
    </physiologicalReaction>
</comment>
<comment type="catalytic activity">
    <reaction evidence="2">
        <text>a globoside Gb3Cer + H2O = a beta-D-galactosyl-(1-&gt;4)-beta-D-glucosyl-(1&lt;-&gt;1)-ceramide + D-galactose</text>
        <dbReference type="Rhea" id="RHEA:48020"/>
        <dbReference type="ChEBI" id="CHEBI:4139"/>
        <dbReference type="ChEBI" id="CHEBI:15377"/>
        <dbReference type="ChEBI" id="CHEBI:79208"/>
        <dbReference type="ChEBI" id="CHEBI:88154"/>
    </reaction>
    <physiologicalReaction direction="left-to-right" evidence="2">
        <dbReference type="Rhea" id="RHEA:48021"/>
    </physiologicalReaction>
</comment>
<comment type="activity regulation">
    <text evidence="2">Galactosylgalactosylglucosylceramidase activity is stimulated by saposin B and ammonium chloride.</text>
</comment>
<comment type="subunit">
    <text evidence="2">Homodimer.</text>
</comment>
<comment type="subcellular location">
    <subcellularLocation>
        <location>Lysosome</location>
    </subcellularLocation>
</comment>
<comment type="similarity">
    <text evidence="3">Belongs to the glycosyl hydrolase 27 family.</text>
</comment>
<proteinExistence type="evidence at protein level"/>
<dbReference type="EC" id="3.2.1.22" evidence="2"/>
<dbReference type="EMBL" id="U34071">
    <property type="protein sequence ID" value="AAA96749.1"/>
    <property type="molecule type" value="mRNA"/>
</dbReference>
<dbReference type="EMBL" id="L46651">
    <property type="protein sequence ID" value="AAA74453.1"/>
    <property type="molecule type" value="Genomic_DNA"/>
</dbReference>
<dbReference type="EMBL" id="U58105">
    <property type="protein sequence ID" value="AAB47244.1"/>
    <property type="molecule type" value="Genomic_DNA"/>
</dbReference>
<dbReference type="EMBL" id="U50716">
    <property type="protein sequence ID" value="AAC52584.1"/>
    <property type="molecule type" value="mRNA"/>
</dbReference>
<dbReference type="EMBL" id="U50715">
    <property type="protein sequence ID" value="AAC52583.1"/>
    <property type="molecule type" value="Genomic_DNA"/>
</dbReference>
<dbReference type="EMBL" id="BC009021">
    <property type="protein sequence ID" value="AAH09021.1"/>
    <property type="molecule type" value="mRNA"/>
</dbReference>
<dbReference type="PIR" id="JC4522">
    <property type="entry name" value="JC4522"/>
</dbReference>
<dbReference type="SMR" id="P51569"/>
<dbReference type="FunCoup" id="P51569">
    <property type="interactions" value="1398"/>
</dbReference>
<dbReference type="STRING" id="10090.ENSMUSP00000159121"/>
<dbReference type="CAZy" id="GH27">
    <property type="family name" value="Glycoside Hydrolase Family 27"/>
</dbReference>
<dbReference type="GlyCosmos" id="P51569">
    <property type="glycosylation" value="3 sites, No reported glycans"/>
</dbReference>
<dbReference type="GlyGen" id="P51569">
    <property type="glycosylation" value="4 sites, 2 N-linked glycans (2 sites)"/>
</dbReference>
<dbReference type="iPTMnet" id="P51569"/>
<dbReference type="PhosphoSitePlus" id="P51569"/>
<dbReference type="PaxDb" id="10090-ENSMUSP00000033621"/>
<dbReference type="PeptideAtlas" id="P51569"/>
<dbReference type="ProteomicsDB" id="296076"/>
<dbReference type="Pumba" id="P51569"/>
<dbReference type="Antibodypedia" id="377">
    <property type="antibodies" value="442 antibodies from 34 providers"/>
</dbReference>
<dbReference type="Ensembl" id="ENSMUST00000033621.8">
    <property type="protein sequence ID" value="ENSMUSP00000033621.8"/>
    <property type="gene ID" value="ENSMUSG00000031266.8"/>
</dbReference>
<dbReference type="AGR" id="MGI:1347344"/>
<dbReference type="MGI" id="MGI:1347344">
    <property type="gene designation" value="Gla"/>
</dbReference>
<dbReference type="VEuPathDB" id="HostDB:ENSMUSG00000031266"/>
<dbReference type="eggNOG" id="KOG2366">
    <property type="taxonomic scope" value="Eukaryota"/>
</dbReference>
<dbReference type="GeneTree" id="ENSGT00390000008751"/>
<dbReference type="InParanoid" id="P51569"/>
<dbReference type="Reactome" id="R-MMU-6798695">
    <property type="pathway name" value="Neutrophil degranulation"/>
</dbReference>
<dbReference type="Reactome" id="R-MMU-9840310">
    <property type="pathway name" value="Glycosphingolipid catabolism"/>
</dbReference>
<dbReference type="SABIO-RK" id="P51569"/>
<dbReference type="ChiTaRS" id="Gla">
    <property type="organism name" value="mouse"/>
</dbReference>
<dbReference type="PRO" id="PR:P51569"/>
<dbReference type="Proteomes" id="UP000000589">
    <property type="component" value="Chromosome X"/>
</dbReference>
<dbReference type="RNAct" id="P51569">
    <property type="molecule type" value="protein"/>
</dbReference>
<dbReference type="Bgee" id="ENSMUSG00000031266">
    <property type="expression patterns" value="Expressed in placenta labyrinth and 208 other cell types or tissues"/>
</dbReference>
<dbReference type="ExpressionAtlas" id="P51569">
    <property type="expression patterns" value="baseline and differential"/>
</dbReference>
<dbReference type="GO" id="GO:0005737">
    <property type="term" value="C:cytoplasm"/>
    <property type="evidence" value="ECO:0000250"/>
    <property type="project" value="UniProtKB"/>
</dbReference>
<dbReference type="GO" id="GO:0005576">
    <property type="term" value="C:extracellular region"/>
    <property type="evidence" value="ECO:0000250"/>
    <property type="project" value="UniProtKB"/>
</dbReference>
<dbReference type="GO" id="GO:0005615">
    <property type="term" value="C:extracellular space"/>
    <property type="evidence" value="ECO:0000314"/>
    <property type="project" value="MGI"/>
</dbReference>
<dbReference type="GO" id="GO:0005794">
    <property type="term" value="C:Golgi apparatus"/>
    <property type="evidence" value="ECO:0000250"/>
    <property type="project" value="UniProtKB"/>
</dbReference>
<dbReference type="GO" id="GO:0005764">
    <property type="term" value="C:lysosome"/>
    <property type="evidence" value="ECO:0000314"/>
    <property type="project" value="MGI"/>
</dbReference>
<dbReference type="GO" id="GO:0016020">
    <property type="term" value="C:membrane"/>
    <property type="evidence" value="ECO:0007669"/>
    <property type="project" value="GOC"/>
</dbReference>
<dbReference type="GO" id="GO:0004557">
    <property type="term" value="F:alpha-galactosidase activity"/>
    <property type="evidence" value="ECO:0000314"/>
    <property type="project" value="MGI"/>
</dbReference>
<dbReference type="GO" id="GO:0003824">
    <property type="term" value="F:catalytic activity"/>
    <property type="evidence" value="ECO:0000250"/>
    <property type="project" value="UniProtKB"/>
</dbReference>
<dbReference type="GO" id="GO:0016787">
    <property type="term" value="F:hydrolase activity"/>
    <property type="evidence" value="ECO:0000314"/>
    <property type="project" value="MGI"/>
</dbReference>
<dbReference type="GO" id="GO:0042803">
    <property type="term" value="F:protein homodimerization activity"/>
    <property type="evidence" value="ECO:0000250"/>
    <property type="project" value="UniProtKB"/>
</dbReference>
<dbReference type="GO" id="GO:0005102">
    <property type="term" value="F:signaling receptor binding"/>
    <property type="evidence" value="ECO:0000250"/>
    <property type="project" value="UniProtKB"/>
</dbReference>
<dbReference type="GO" id="GO:0035904">
    <property type="term" value="P:aorta development"/>
    <property type="evidence" value="ECO:0000315"/>
    <property type="project" value="MGI"/>
</dbReference>
<dbReference type="GO" id="GO:0046477">
    <property type="term" value="P:glycosylceramide catabolic process"/>
    <property type="evidence" value="ECO:0000314"/>
    <property type="project" value="MGI"/>
</dbReference>
<dbReference type="GO" id="GO:0045019">
    <property type="term" value="P:negative regulation of nitric oxide biosynthetic process"/>
    <property type="evidence" value="ECO:0000315"/>
    <property type="project" value="UniProtKB"/>
</dbReference>
<dbReference type="GO" id="GO:0051001">
    <property type="term" value="P:negative regulation of nitric-oxide synthase activity"/>
    <property type="evidence" value="ECO:0000315"/>
    <property type="project" value="UniProtKB"/>
</dbReference>
<dbReference type="GO" id="GO:0009311">
    <property type="term" value="P:oligosaccharide metabolic process"/>
    <property type="evidence" value="ECO:0000250"/>
    <property type="project" value="UniProtKB"/>
</dbReference>
<dbReference type="CDD" id="cd14792">
    <property type="entry name" value="GH27"/>
    <property type="match status" value="1"/>
</dbReference>
<dbReference type="FunFam" id="3.20.20.70:FF:000070">
    <property type="entry name" value="Alpha-galactosidase"/>
    <property type="match status" value="1"/>
</dbReference>
<dbReference type="FunFam" id="2.60.40.1180:FF:000017">
    <property type="entry name" value="Alpha-galactosidase A"/>
    <property type="match status" value="1"/>
</dbReference>
<dbReference type="Gene3D" id="3.20.20.70">
    <property type="entry name" value="Aldolase class I"/>
    <property type="match status" value="1"/>
</dbReference>
<dbReference type="Gene3D" id="2.60.40.1180">
    <property type="entry name" value="Golgi alpha-mannosidase II"/>
    <property type="match status" value="1"/>
</dbReference>
<dbReference type="InterPro" id="IPR013785">
    <property type="entry name" value="Aldolase_TIM"/>
</dbReference>
<dbReference type="InterPro" id="IPR002241">
    <property type="entry name" value="Glyco_hydro_27"/>
</dbReference>
<dbReference type="InterPro" id="IPR000111">
    <property type="entry name" value="Glyco_hydro_27/36_CS"/>
</dbReference>
<dbReference type="InterPro" id="IPR013780">
    <property type="entry name" value="Glyco_hydro_b"/>
</dbReference>
<dbReference type="InterPro" id="IPR017853">
    <property type="entry name" value="Glycoside_hydrolase_SF"/>
</dbReference>
<dbReference type="InterPro" id="IPR035373">
    <property type="entry name" value="Melibiase/NAGA_C"/>
</dbReference>
<dbReference type="PANTHER" id="PTHR11452:SF14">
    <property type="entry name" value="ALPHA-GALACTOSIDASE A"/>
    <property type="match status" value="1"/>
</dbReference>
<dbReference type="PANTHER" id="PTHR11452">
    <property type="entry name" value="ALPHA-GALACTOSIDASE/ALPHA-N-ACETYLGALACTOSAMINIDASE"/>
    <property type="match status" value="1"/>
</dbReference>
<dbReference type="Pfam" id="PF16499">
    <property type="entry name" value="Melibiase_2"/>
    <property type="match status" value="1"/>
</dbReference>
<dbReference type="Pfam" id="PF17450">
    <property type="entry name" value="Melibiase_2_C"/>
    <property type="match status" value="1"/>
</dbReference>
<dbReference type="PRINTS" id="PR00740">
    <property type="entry name" value="GLHYDRLASE27"/>
</dbReference>
<dbReference type="SUPFAM" id="SSF51445">
    <property type="entry name" value="(Trans)glycosidases"/>
    <property type="match status" value="1"/>
</dbReference>
<dbReference type="SUPFAM" id="SSF51011">
    <property type="entry name" value="Glycosyl hydrolase domain"/>
    <property type="match status" value="1"/>
</dbReference>
<dbReference type="PROSITE" id="PS00512">
    <property type="entry name" value="ALPHA_GALACTOSIDASE"/>
    <property type="match status" value="1"/>
</dbReference>
<evidence type="ECO:0000250" key="1"/>
<evidence type="ECO:0000250" key="2">
    <source>
        <dbReference type="UniProtKB" id="P06280"/>
    </source>
</evidence>
<evidence type="ECO:0000305" key="3"/>
<evidence type="ECO:0000312" key="4">
    <source>
        <dbReference type="MGI" id="MGI:1347344"/>
    </source>
</evidence>
<evidence type="ECO:0007744" key="5">
    <source>
    </source>
</evidence>
<protein>
    <recommendedName>
        <fullName evidence="3">Alpha-galactosidase A</fullName>
        <ecNumber evidence="2">3.2.1.22</ecNumber>
    </recommendedName>
    <alternativeName>
        <fullName>Alpha-D-galactosidase A</fullName>
    </alternativeName>
    <alternativeName>
        <fullName>Alpha-D-galactoside galactohydrolase</fullName>
    </alternativeName>
    <alternativeName>
        <fullName evidence="2">Galactosylgalactosylglucosylceramidase GLA</fullName>
    </alternativeName>
    <alternativeName>
        <fullName>Melibiase</fullName>
    </alternativeName>
</protein>
<keyword id="KW-1015">Disulfide bond</keyword>
<keyword id="KW-0325">Glycoprotein</keyword>
<keyword id="KW-0326">Glycosidase</keyword>
<keyword id="KW-0378">Hydrolase</keyword>
<keyword id="KW-0443">Lipid metabolism</keyword>
<keyword id="KW-0458">Lysosome</keyword>
<keyword id="KW-0597">Phosphoprotein</keyword>
<keyword id="KW-1185">Reference proteome</keyword>
<keyword id="KW-0732">Signal</keyword>
<gene>
    <name evidence="4" type="primary">Gla</name>
    <name type="synonym">Ags</name>
</gene>
<sequence>MKLLSRDTRLVCELALCPLALVFWSILGVRALDNGLARTPTMGWLHWERFMCNLDCQEEPDACISEQLFMQMAELMVSDGWRDAGYDYLCIDDCWMAPERDSKGRLQADPQRFPSGIKHLANYVHSKGLKLGIYADVGNKTCAGFPGSFGSYDIDAQTFADWGVDLLKFDGCHCDSVVSLENGYKYMALALNRTGRSIVYSCEWPLYLRPFHKPNYTDIQYYCNHWRNFDDVYDSWESIKNILSWTVVYQKEIVEVAGPGSWNDPDMLVIGNFGLSWDQQVTQMALWAIMAAPLLMSNDLRQISSQAKALLQNKDVIAINQDPLGKQGYCFRKENHIEVWERPLSNLAWAVAVRNLQEIGGPCPYTIQISSLGRGLACNPGCIITQLLPEKVHLGFYEWTLTLKTRVNPSGTVLFRLER</sequence>
<reference key="1">
    <citation type="journal article" date="1995" name="Gene">
        <title>Structural organization and expression of the mouse gene encoding alpha-galactosidase A.</title>
        <authorList>
            <person name="Ohshima T."/>
            <person name="Murray G.J."/>
            <person name="Nagle J.W."/>
            <person name="Quirk J.M."/>
            <person name="Kraus M.H."/>
            <person name="Barton N.W."/>
            <person name="Brady R.O."/>
            <person name="Kulkarni A.B."/>
        </authorList>
    </citation>
    <scope>NUCLEOTIDE SEQUENCE [MRNA]</scope>
    <source>
        <strain>C57BL/6J</strain>
        <tissue>Kidney</tissue>
    </source>
</reference>
<reference key="2">
    <citation type="journal article" date="1995" name="Mamm. Genome">
        <title>Sixty-nine kilobases of contiguous human genomic sequence containing the alpha-galactosidase A and Bruton's tyrosine kinase loci.</title>
        <authorList>
            <person name="Oeltjen J.C."/>
            <person name="Liu X."/>
            <person name="Lu J."/>
            <person name="Allen R.C."/>
            <person name="Muzny D.M."/>
            <person name="Belmont J.W."/>
            <person name="Gibbs R.A."/>
        </authorList>
    </citation>
    <scope>NUCLEOTIDE SEQUENCE [GENOMIC DNA]</scope>
    <source>
        <strain>C129</strain>
    </source>
</reference>
<reference key="3">
    <citation type="journal article" date="1996" name="Biochem. Mol. Med.">
        <title>The entire genomic sequence and cDNA expression of mouse alpha-galactosidase A.</title>
        <authorList>
            <person name="Gotlib R.W."/>
            <person name="Bishop D.F."/>
            <person name="Wang A.M."/>
            <person name="Zeidner K.M."/>
            <person name="Ioannou Y.I."/>
            <person name="Adler D.A."/>
            <person name="Disteche C.M."/>
            <person name="Desnick R.J."/>
        </authorList>
    </citation>
    <scope>NUCLEOTIDE SEQUENCE [GENOMIC DNA / MRNA]</scope>
</reference>
<reference key="4">
    <citation type="journal article" date="2004" name="Genome Res.">
        <title>The status, quality, and expansion of the NIH full-length cDNA project: the Mammalian Gene Collection (MGC).</title>
        <authorList>
            <consortium name="The MGC Project Team"/>
        </authorList>
    </citation>
    <scope>NUCLEOTIDE SEQUENCE [LARGE SCALE MRNA]</scope>
    <source>
        <strain>FVB/N</strain>
        <tissue>Mammary gland</tissue>
    </source>
</reference>
<reference key="5">
    <citation type="journal article" date="2008" name="J. Proteome Res.">
        <title>Large-scale identification and evolution indexing of tyrosine phosphorylation sites from murine brain.</title>
        <authorList>
            <person name="Ballif B.A."/>
            <person name="Carey G.R."/>
            <person name="Sunyaev S.R."/>
            <person name="Gygi S.P."/>
        </authorList>
    </citation>
    <scope>PHOSPHORYLATION [LARGE SCALE ANALYSIS] AT TYR-186</scope>
    <scope>IDENTIFICATION BY MASS SPECTROMETRY [LARGE SCALE ANALYSIS]</scope>
    <source>
        <tissue>Brain</tissue>
    </source>
</reference>
<reference key="6">
    <citation type="journal article" date="2010" name="Cell">
        <title>A tissue-specific atlas of mouse protein phosphorylation and expression.</title>
        <authorList>
            <person name="Huttlin E.L."/>
            <person name="Jedrychowski M.P."/>
            <person name="Elias J.E."/>
            <person name="Goswami T."/>
            <person name="Rad R."/>
            <person name="Beausoleil S.A."/>
            <person name="Villen J."/>
            <person name="Haas W."/>
            <person name="Sowa M.E."/>
            <person name="Gygi S.P."/>
        </authorList>
    </citation>
    <scope>IDENTIFICATION BY MASS SPECTROMETRY [LARGE SCALE ANALYSIS]</scope>
    <source>
        <tissue>Spleen</tissue>
    </source>
</reference>
<accession>P51569</accession>